<accession>O32034</accession>
<comment type="function">
    <text evidence="1">Involved in prephenate-dependent formation of 5-hydroxyuridine (ho5U) modification at position 34 in tRNAs, the first step in 5-methoxyuridine (mo5U) biosynthesis.</text>
</comment>
<comment type="disruption phenotype">
    <text evidence="1">Deletion mutant lacking both trhP1 and trhP2 shows reduced 5-methoxyuridine (mo5U) formation in tRNAs.</text>
</comment>
<comment type="similarity">
    <text evidence="3">Belongs to the peptidase U32 family.</text>
</comment>
<dbReference type="EC" id="3.4.-.-" evidence="3"/>
<dbReference type="EMBL" id="AL009126">
    <property type="protein sequence ID" value="CAB14676.1"/>
    <property type="molecule type" value="Genomic_DNA"/>
</dbReference>
<dbReference type="PIR" id="H69979">
    <property type="entry name" value="H69979"/>
</dbReference>
<dbReference type="RefSeq" id="NP_390612.1">
    <property type="nucleotide sequence ID" value="NC_000964.3"/>
</dbReference>
<dbReference type="RefSeq" id="WP_003229802.1">
    <property type="nucleotide sequence ID" value="NZ_OZ025638.1"/>
</dbReference>
<dbReference type="FunCoup" id="O32034">
    <property type="interactions" value="154"/>
</dbReference>
<dbReference type="IntAct" id="O32034">
    <property type="interactions" value="1"/>
</dbReference>
<dbReference type="STRING" id="224308.BSU27340"/>
<dbReference type="MEROPS" id="U32.002"/>
<dbReference type="jPOST" id="O32034"/>
<dbReference type="PaxDb" id="224308-BSU27340"/>
<dbReference type="EnsemblBacteria" id="CAB14676">
    <property type="protein sequence ID" value="CAB14676"/>
    <property type="gene ID" value="BSU_27340"/>
</dbReference>
<dbReference type="GeneID" id="937561"/>
<dbReference type="KEGG" id="bsu:BSU27340"/>
<dbReference type="PATRIC" id="fig|224308.179.peg.2970"/>
<dbReference type="eggNOG" id="COG0826">
    <property type="taxonomic scope" value="Bacteria"/>
</dbReference>
<dbReference type="InParanoid" id="O32034"/>
<dbReference type="OrthoDB" id="9807498at2"/>
<dbReference type="PhylomeDB" id="O32034"/>
<dbReference type="BioCyc" id="BSUB:BSU27340-MONOMER"/>
<dbReference type="Proteomes" id="UP000001570">
    <property type="component" value="Chromosome"/>
</dbReference>
<dbReference type="GO" id="GO:0008233">
    <property type="term" value="F:peptidase activity"/>
    <property type="evidence" value="ECO:0007669"/>
    <property type="project" value="UniProtKB-KW"/>
</dbReference>
<dbReference type="GO" id="GO:0006508">
    <property type="term" value="P:proteolysis"/>
    <property type="evidence" value="ECO:0007669"/>
    <property type="project" value="UniProtKB-KW"/>
</dbReference>
<dbReference type="GO" id="GO:0006400">
    <property type="term" value="P:tRNA modification"/>
    <property type="evidence" value="ECO:0000315"/>
    <property type="project" value="UniProtKB"/>
</dbReference>
<dbReference type="Gene3D" id="2.40.30.10">
    <property type="entry name" value="Translation factors"/>
    <property type="match status" value="1"/>
</dbReference>
<dbReference type="InterPro" id="IPR001539">
    <property type="entry name" value="Peptidase_U32"/>
</dbReference>
<dbReference type="InterPro" id="IPR032525">
    <property type="entry name" value="Peptidase_U32_C"/>
</dbReference>
<dbReference type="InterPro" id="IPR051454">
    <property type="entry name" value="RNA/ubiquinone_mod_enzymes"/>
</dbReference>
<dbReference type="PANTHER" id="PTHR30217">
    <property type="entry name" value="PEPTIDASE U32 FAMILY"/>
    <property type="match status" value="1"/>
</dbReference>
<dbReference type="PANTHER" id="PTHR30217:SF6">
    <property type="entry name" value="TRNA HYDROXYLATION PROTEIN P"/>
    <property type="match status" value="1"/>
</dbReference>
<dbReference type="Pfam" id="PF01136">
    <property type="entry name" value="Peptidase_U32"/>
    <property type="match status" value="1"/>
</dbReference>
<dbReference type="Pfam" id="PF16325">
    <property type="entry name" value="Peptidase_U32_C"/>
    <property type="match status" value="1"/>
</dbReference>
<dbReference type="PROSITE" id="PS01276">
    <property type="entry name" value="PEPTIDASE_U32"/>
    <property type="match status" value="1"/>
</dbReference>
<proteinExistence type="inferred from homology"/>
<name>TRHP1_BACSU</name>
<evidence type="ECO:0000269" key="1">
    <source>
    </source>
</evidence>
<evidence type="ECO:0000303" key="2">
    <source>
    </source>
</evidence>
<evidence type="ECO:0000305" key="3"/>
<gene>
    <name evidence="2" type="primary">trhP1</name>
    <name type="synonym">yrrO</name>
    <name type="ordered locus">BSU27340</name>
</gene>
<reference key="1">
    <citation type="journal article" date="1997" name="Nature">
        <title>The complete genome sequence of the Gram-positive bacterium Bacillus subtilis.</title>
        <authorList>
            <person name="Kunst F."/>
            <person name="Ogasawara N."/>
            <person name="Moszer I."/>
            <person name="Albertini A.M."/>
            <person name="Alloni G."/>
            <person name="Azevedo V."/>
            <person name="Bertero M.G."/>
            <person name="Bessieres P."/>
            <person name="Bolotin A."/>
            <person name="Borchert S."/>
            <person name="Borriss R."/>
            <person name="Boursier L."/>
            <person name="Brans A."/>
            <person name="Braun M."/>
            <person name="Brignell S.C."/>
            <person name="Bron S."/>
            <person name="Brouillet S."/>
            <person name="Bruschi C.V."/>
            <person name="Caldwell B."/>
            <person name="Capuano V."/>
            <person name="Carter N.M."/>
            <person name="Choi S.-K."/>
            <person name="Codani J.-J."/>
            <person name="Connerton I.F."/>
            <person name="Cummings N.J."/>
            <person name="Daniel R.A."/>
            <person name="Denizot F."/>
            <person name="Devine K.M."/>
            <person name="Duesterhoeft A."/>
            <person name="Ehrlich S.D."/>
            <person name="Emmerson P.T."/>
            <person name="Entian K.-D."/>
            <person name="Errington J."/>
            <person name="Fabret C."/>
            <person name="Ferrari E."/>
            <person name="Foulger D."/>
            <person name="Fritz C."/>
            <person name="Fujita M."/>
            <person name="Fujita Y."/>
            <person name="Fuma S."/>
            <person name="Galizzi A."/>
            <person name="Galleron N."/>
            <person name="Ghim S.-Y."/>
            <person name="Glaser P."/>
            <person name="Goffeau A."/>
            <person name="Golightly E.J."/>
            <person name="Grandi G."/>
            <person name="Guiseppi G."/>
            <person name="Guy B.J."/>
            <person name="Haga K."/>
            <person name="Haiech J."/>
            <person name="Harwood C.R."/>
            <person name="Henaut A."/>
            <person name="Hilbert H."/>
            <person name="Holsappel S."/>
            <person name="Hosono S."/>
            <person name="Hullo M.-F."/>
            <person name="Itaya M."/>
            <person name="Jones L.-M."/>
            <person name="Joris B."/>
            <person name="Karamata D."/>
            <person name="Kasahara Y."/>
            <person name="Klaerr-Blanchard M."/>
            <person name="Klein C."/>
            <person name="Kobayashi Y."/>
            <person name="Koetter P."/>
            <person name="Koningstein G."/>
            <person name="Krogh S."/>
            <person name="Kumano M."/>
            <person name="Kurita K."/>
            <person name="Lapidus A."/>
            <person name="Lardinois S."/>
            <person name="Lauber J."/>
            <person name="Lazarevic V."/>
            <person name="Lee S.-M."/>
            <person name="Levine A."/>
            <person name="Liu H."/>
            <person name="Masuda S."/>
            <person name="Mauel C."/>
            <person name="Medigue C."/>
            <person name="Medina N."/>
            <person name="Mellado R.P."/>
            <person name="Mizuno M."/>
            <person name="Moestl D."/>
            <person name="Nakai S."/>
            <person name="Noback M."/>
            <person name="Noone D."/>
            <person name="O'Reilly M."/>
            <person name="Ogawa K."/>
            <person name="Ogiwara A."/>
            <person name="Oudega B."/>
            <person name="Park S.-H."/>
            <person name="Parro V."/>
            <person name="Pohl T.M."/>
            <person name="Portetelle D."/>
            <person name="Porwollik S."/>
            <person name="Prescott A.M."/>
            <person name="Presecan E."/>
            <person name="Pujic P."/>
            <person name="Purnelle B."/>
            <person name="Rapoport G."/>
            <person name="Rey M."/>
            <person name="Reynolds S."/>
            <person name="Rieger M."/>
            <person name="Rivolta C."/>
            <person name="Rocha E."/>
            <person name="Roche B."/>
            <person name="Rose M."/>
            <person name="Sadaie Y."/>
            <person name="Sato T."/>
            <person name="Scanlan E."/>
            <person name="Schleich S."/>
            <person name="Schroeter R."/>
            <person name="Scoffone F."/>
            <person name="Sekiguchi J."/>
            <person name="Sekowska A."/>
            <person name="Seror S.J."/>
            <person name="Serror P."/>
            <person name="Shin B.-S."/>
            <person name="Soldo B."/>
            <person name="Sorokin A."/>
            <person name="Tacconi E."/>
            <person name="Takagi T."/>
            <person name="Takahashi H."/>
            <person name="Takemaru K."/>
            <person name="Takeuchi M."/>
            <person name="Tamakoshi A."/>
            <person name="Tanaka T."/>
            <person name="Terpstra P."/>
            <person name="Tognoni A."/>
            <person name="Tosato V."/>
            <person name="Uchiyama S."/>
            <person name="Vandenbol M."/>
            <person name="Vannier F."/>
            <person name="Vassarotti A."/>
            <person name="Viari A."/>
            <person name="Wambutt R."/>
            <person name="Wedler E."/>
            <person name="Wedler H."/>
            <person name="Weitzenegger T."/>
            <person name="Winters P."/>
            <person name="Wipat A."/>
            <person name="Yamamoto H."/>
            <person name="Yamane K."/>
            <person name="Yasumoto K."/>
            <person name="Yata K."/>
            <person name="Yoshida K."/>
            <person name="Yoshikawa H.-F."/>
            <person name="Zumstein E."/>
            <person name="Yoshikawa H."/>
            <person name="Danchin A."/>
        </authorList>
    </citation>
    <scope>NUCLEOTIDE SEQUENCE [LARGE SCALE GENOMIC DNA]</scope>
    <source>
        <strain>168</strain>
    </source>
</reference>
<reference key="2">
    <citation type="journal article" date="2019" name="Nat. Commun.">
        <title>Dual pathways of tRNA hydroxylation ensure efficient translation by expanding decoding capability.</title>
        <authorList>
            <person name="Sakai Y."/>
            <person name="Kimura S."/>
            <person name="Suzuki T."/>
        </authorList>
    </citation>
    <scope>FUNCTION</scope>
    <scope>DISRUPTION PHENOTYPE</scope>
</reference>
<protein>
    <recommendedName>
        <fullName evidence="2">tRNA hydroxylation protein P1</fullName>
        <ecNumber evidence="3">3.4.-.-</ecNumber>
    </recommendedName>
</protein>
<keyword id="KW-0378">Hydrolase</keyword>
<keyword id="KW-0645">Protease</keyword>
<keyword id="KW-1185">Reference proteome</keyword>
<keyword id="KW-0819">tRNA processing</keyword>
<organism>
    <name type="scientific">Bacillus subtilis (strain 168)</name>
    <dbReference type="NCBI Taxonomy" id="224308"/>
    <lineage>
        <taxon>Bacteria</taxon>
        <taxon>Bacillati</taxon>
        <taxon>Bacillota</taxon>
        <taxon>Bacilli</taxon>
        <taxon>Bacillales</taxon>
        <taxon>Bacillaceae</taxon>
        <taxon>Bacillus</taxon>
    </lineage>
</organism>
<sequence>MTAVNDKISTIVNGKRVITKKPELLAPAGNLEKLKIAVHYGADAVFIGGQEYGLRSNADNFTIEEIAEGVEFAKKYGAKIYVTTNIFAHNENMDGLEDYLKALGDANVAGIIVADPLIIETCRRVAPNVEVHLSTQQSLSNWKAVQFWKEEGLDRVVLARETSALEIREMKEKVDIEIESFIHGAMCIAYSGRCVLSNHMTARDSNRGGCCQSCRWDYDLYQTDGANAVALYGEEDAPFAMSPKDLKLIESIPKMIEMGIDSLKIEGRMKSIHYVATVVSVYRKVIDAYCADPENFVIQKEWLEELDKCANRDTATAFFEGTPGYEEQMFGEHAKKTTYDFVGLVLNYDEDTQMVTLQQRNFFKKGDEVEFFGPEIENFTHTIETIWDEDGNELDAARHPLQIVKFKLDKKIYPSNMMRKGK</sequence>
<feature type="chain" id="PRO_0000360803" description="tRNA hydroxylation protein P1">
    <location>
        <begin position="1"/>
        <end position="422"/>
    </location>
</feature>